<protein>
    <recommendedName>
        <fullName evidence="1">Enolase</fullName>
        <ecNumber evidence="1">4.2.1.11</ecNumber>
    </recommendedName>
    <alternativeName>
        <fullName evidence="1">2-phospho-D-glycerate hydro-lyase</fullName>
    </alternativeName>
    <alternativeName>
        <fullName evidence="1">2-phosphoglycerate dehydratase</fullName>
    </alternativeName>
</protein>
<proteinExistence type="inferred from homology"/>
<sequence length="431" mass="46436">MKNYIEIVDVYARQILDSRCNPTVEVEVELEDGTVGVAAVPSGASTGAFEAVELRDGDKSKYLGKGVLKAVDNVNTIIADELVGMNVLDQVAIDKTMIELDGTDNKAKLGANAMLGVSLACAKAAANSLGMSLYQYIGGVNAKVLPVPMMNIINGGKHADNNVDLQEFMIMPAGAPSFSEALRMCSEVYHALKSTLKSQGYDTGVGDEGGFAPNLKSNEEAIVVIIEAIKEAGYTPGKDIFIALDPASSEIFEDGKYNLAGEGRVLTPEEMANYYVELAEKYPIISIEDGMAEEDWDGWKILTEKIGNKVQLVGDDLFVTNTERLSKGIKLGVANSILIKLNQIGTLTETLNAIEMAERAGYTAVVSHRSGETEDTTIADLVVAVNAGQIKTGAPARSERVAKYNQLLRIEEELNDMGEYRGLKAFYNINK</sequence>
<reference key="1">
    <citation type="journal article" date="2007" name="PLoS ONE">
        <title>Analysis of the neurotoxin complex genes in Clostridium botulinum A1-A4 and B1 strains: BoNT/A3, /Ba4 and /B1 clusters are located within plasmids.</title>
        <authorList>
            <person name="Smith T.J."/>
            <person name="Hill K.K."/>
            <person name="Foley B.T."/>
            <person name="Detter J.C."/>
            <person name="Munk A.C."/>
            <person name="Bruce D.C."/>
            <person name="Doggett N.A."/>
            <person name="Smith L.A."/>
            <person name="Marks J.D."/>
            <person name="Xie G."/>
            <person name="Brettin T.S."/>
        </authorList>
    </citation>
    <scope>NUCLEOTIDE SEQUENCE [LARGE SCALE GENOMIC DNA]</scope>
    <source>
        <strain>Okra / Type B1</strain>
    </source>
</reference>
<evidence type="ECO:0000255" key="1">
    <source>
        <dbReference type="HAMAP-Rule" id="MF_00318"/>
    </source>
</evidence>
<feature type="chain" id="PRO_1000115851" description="Enolase">
    <location>
        <begin position="1"/>
        <end position="431"/>
    </location>
</feature>
<feature type="active site" description="Proton donor" evidence="1">
    <location>
        <position position="208"/>
    </location>
</feature>
<feature type="active site" description="Proton acceptor" evidence="1">
    <location>
        <position position="340"/>
    </location>
</feature>
<feature type="binding site" evidence="1">
    <location>
        <position position="166"/>
    </location>
    <ligand>
        <name>(2R)-2-phosphoglycerate</name>
        <dbReference type="ChEBI" id="CHEBI:58289"/>
    </ligand>
</feature>
<feature type="binding site" evidence="1">
    <location>
        <position position="245"/>
    </location>
    <ligand>
        <name>Mg(2+)</name>
        <dbReference type="ChEBI" id="CHEBI:18420"/>
    </ligand>
</feature>
<feature type="binding site" evidence="1">
    <location>
        <position position="288"/>
    </location>
    <ligand>
        <name>Mg(2+)</name>
        <dbReference type="ChEBI" id="CHEBI:18420"/>
    </ligand>
</feature>
<feature type="binding site" evidence="1">
    <location>
        <position position="315"/>
    </location>
    <ligand>
        <name>Mg(2+)</name>
        <dbReference type="ChEBI" id="CHEBI:18420"/>
    </ligand>
</feature>
<feature type="binding site" evidence="1">
    <location>
        <position position="340"/>
    </location>
    <ligand>
        <name>(2R)-2-phosphoglycerate</name>
        <dbReference type="ChEBI" id="CHEBI:58289"/>
    </ligand>
</feature>
<feature type="binding site" evidence="1">
    <location>
        <position position="369"/>
    </location>
    <ligand>
        <name>(2R)-2-phosphoglycerate</name>
        <dbReference type="ChEBI" id="CHEBI:58289"/>
    </ligand>
</feature>
<feature type="binding site" evidence="1">
    <location>
        <position position="370"/>
    </location>
    <ligand>
        <name>(2R)-2-phosphoglycerate</name>
        <dbReference type="ChEBI" id="CHEBI:58289"/>
    </ligand>
</feature>
<feature type="binding site" evidence="1">
    <location>
        <position position="391"/>
    </location>
    <ligand>
        <name>(2R)-2-phosphoglycerate</name>
        <dbReference type="ChEBI" id="CHEBI:58289"/>
    </ligand>
</feature>
<comment type="function">
    <text evidence="1">Catalyzes the reversible conversion of 2-phosphoglycerate (2-PG) into phosphoenolpyruvate (PEP). It is essential for the degradation of carbohydrates via glycolysis.</text>
</comment>
<comment type="catalytic activity">
    <reaction evidence="1">
        <text>(2R)-2-phosphoglycerate = phosphoenolpyruvate + H2O</text>
        <dbReference type="Rhea" id="RHEA:10164"/>
        <dbReference type="ChEBI" id="CHEBI:15377"/>
        <dbReference type="ChEBI" id="CHEBI:58289"/>
        <dbReference type="ChEBI" id="CHEBI:58702"/>
        <dbReference type="EC" id="4.2.1.11"/>
    </reaction>
</comment>
<comment type="cofactor">
    <cofactor evidence="1">
        <name>Mg(2+)</name>
        <dbReference type="ChEBI" id="CHEBI:18420"/>
    </cofactor>
    <text evidence="1">Binds a second Mg(2+) ion via substrate during catalysis.</text>
</comment>
<comment type="pathway">
    <text evidence="1">Carbohydrate degradation; glycolysis; pyruvate from D-glyceraldehyde 3-phosphate: step 4/5.</text>
</comment>
<comment type="subcellular location">
    <subcellularLocation>
        <location evidence="1">Cytoplasm</location>
    </subcellularLocation>
    <subcellularLocation>
        <location evidence="1">Secreted</location>
    </subcellularLocation>
    <subcellularLocation>
        <location evidence="1">Cell surface</location>
    </subcellularLocation>
    <text evidence="1">Fractions of enolase are present in both the cytoplasm and on the cell surface.</text>
</comment>
<comment type="similarity">
    <text evidence="1">Belongs to the enolase family.</text>
</comment>
<keyword id="KW-0963">Cytoplasm</keyword>
<keyword id="KW-0324">Glycolysis</keyword>
<keyword id="KW-0456">Lyase</keyword>
<keyword id="KW-0460">Magnesium</keyword>
<keyword id="KW-0479">Metal-binding</keyword>
<keyword id="KW-0964">Secreted</keyword>
<accession>B1IDB9</accession>
<name>ENO_CLOBK</name>
<dbReference type="EC" id="4.2.1.11" evidence="1"/>
<dbReference type="EMBL" id="CP000939">
    <property type="protein sequence ID" value="ACA46062.1"/>
    <property type="molecule type" value="Genomic_DNA"/>
</dbReference>
<dbReference type="RefSeq" id="WP_003399038.1">
    <property type="nucleotide sequence ID" value="NC_010516.1"/>
</dbReference>
<dbReference type="SMR" id="B1IDB9"/>
<dbReference type="KEGG" id="cbb:CLD_0545"/>
<dbReference type="HOGENOM" id="CLU_031223_2_1_9"/>
<dbReference type="UniPathway" id="UPA00109">
    <property type="reaction ID" value="UER00187"/>
</dbReference>
<dbReference type="Proteomes" id="UP000008541">
    <property type="component" value="Chromosome"/>
</dbReference>
<dbReference type="GO" id="GO:0009986">
    <property type="term" value="C:cell surface"/>
    <property type="evidence" value="ECO:0007669"/>
    <property type="project" value="UniProtKB-SubCell"/>
</dbReference>
<dbReference type="GO" id="GO:0005576">
    <property type="term" value="C:extracellular region"/>
    <property type="evidence" value="ECO:0007669"/>
    <property type="project" value="UniProtKB-SubCell"/>
</dbReference>
<dbReference type="GO" id="GO:0000015">
    <property type="term" value="C:phosphopyruvate hydratase complex"/>
    <property type="evidence" value="ECO:0007669"/>
    <property type="project" value="InterPro"/>
</dbReference>
<dbReference type="GO" id="GO:0000287">
    <property type="term" value="F:magnesium ion binding"/>
    <property type="evidence" value="ECO:0007669"/>
    <property type="project" value="UniProtKB-UniRule"/>
</dbReference>
<dbReference type="GO" id="GO:0004634">
    <property type="term" value="F:phosphopyruvate hydratase activity"/>
    <property type="evidence" value="ECO:0007669"/>
    <property type="project" value="UniProtKB-UniRule"/>
</dbReference>
<dbReference type="GO" id="GO:0006096">
    <property type="term" value="P:glycolytic process"/>
    <property type="evidence" value="ECO:0007669"/>
    <property type="project" value="UniProtKB-UniRule"/>
</dbReference>
<dbReference type="CDD" id="cd03313">
    <property type="entry name" value="enolase"/>
    <property type="match status" value="1"/>
</dbReference>
<dbReference type="FunFam" id="3.20.20.120:FF:000001">
    <property type="entry name" value="Enolase"/>
    <property type="match status" value="1"/>
</dbReference>
<dbReference type="FunFam" id="3.30.390.10:FF:000001">
    <property type="entry name" value="Enolase"/>
    <property type="match status" value="1"/>
</dbReference>
<dbReference type="Gene3D" id="3.20.20.120">
    <property type="entry name" value="Enolase-like C-terminal domain"/>
    <property type="match status" value="1"/>
</dbReference>
<dbReference type="Gene3D" id="3.30.390.10">
    <property type="entry name" value="Enolase-like, N-terminal domain"/>
    <property type="match status" value="1"/>
</dbReference>
<dbReference type="HAMAP" id="MF_00318">
    <property type="entry name" value="Enolase"/>
    <property type="match status" value="1"/>
</dbReference>
<dbReference type="InterPro" id="IPR000941">
    <property type="entry name" value="Enolase"/>
</dbReference>
<dbReference type="InterPro" id="IPR036849">
    <property type="entry name" value="Enolase-like_C_sf"/>
</dbReference>
<dbReference type="InterPro" id="IPR029017">
    <property type="entry name" value="Enolase-like_N"/>
</dbReference>
<dbReference type="InterPro" id="IPR020810">
    <property type="entry name" value="Enolase_C"/>
</dbReference>
<dbReference type="InterPro" id="IPR020809">
    <property type="entry name" value="Enolase_CS"/>
</dbReference>
<dbReference type="InterPro" id="IPR020811">
    <property type="entry name" value="Enolase_N"/>
</dbReference>
<dbReference type="NCBIfam" id="TIGR01060">
    <property type="entry name" value="eno"/>
    <property type="match status" value="1"/>
</dbReference>
<dbReference type="PANTHER" id="PTHR11902">
    <property type="entry name" value="ENOLASE"/>
    <property type="match status" value="1"/>
</dbReference>
<dbReference type="PANTHER" id="PTHR11902:SF1">
    <property type="entry name" value="ENOLASE"/>
    <property type="match status" value="1"/>
</dbReference>
<dbReference type="Pfam" id="PF00113">
    <property type="entry name" value="Enolase_C"/>
    <property type="match status" value="1"/>
</dbReference>
<dbReference type="Pfam" id="PF03952">
    <property type="entry name" value="Enolase_N"/>
    <property type="match status" value="1"/>
</dbReference>
<dbReference type="PIRSF" id="PIRSF001400">
    <property type="entry name" value="Enolase"/>
    <property type="match status" value="1"/>
</dbReference>
<dbReference type="PRINTS" id="PR00148">
    <property type="entry name" value="ENOLASE"/>
</dbReference>
<dbReference type="SFLD" id="SFLDF00002">
    <property type="entry name" value="enolase"/>
    <property type="match status" value="1"/>
</dbReference>
<dbReference type="SFLD" id="SFLDG00178">
    <property type="entry name" value="enolase"/>
    <property type="match status" value="1"/>
</dbReference>
<dbReference type="SMART" id="SM01192">
    <property type="entry name" value="Enolase_C"/>
    <property type="match status" value="1"/>
</dbReference>
<dbReference type="SMART" id="SM01193">
    <property type="entry name" value="Enolase_N"/>
    <property type="match status" value="1"/>
</dbReference>
<dbReference type="SUPFAM" id="SSF51604">
    <property type="entry name" value="Enolase C-terminal domain-like"/>
    <property type="match status" value="1"/>
</dbReference>
<dbReference type="SUPFAM" id="SSF54826">
    <property type="entry name" value="Enolase N-terminal domain-like"/>
    <property type="match status" value="1"/>
</dbReference>
<dbReference type="PROSITE" id="PS00164">
    <property type="entry name" value="ENOLASE"/>
    <property type="match status" value="1"/>
</dbReference>
<organism>
    <name type="scientific">Clostridium botulinum (strain Okra / Type B1)</name>
    <dbReference type="NCBI Taxonomy" id="498213"/>
    <lineage>
        <taxon>Bacteria</taxon>
        <taxon>Bacillati</taxon>
        <taxon>Bacillota</taxon>
        <taxon>Clostridia</taxon>
        <taxon>Eubacteriales</taxon>
        <taxon>Clostridiaceae</taxon>
        <taxon>Clostridium</taxon>
    </lineage>
</organism>
<gene>
    <name evidence="1" type="primary">eno</name>
    <name type="ordered locus">CLD_0545</name>
</gene>